<reference key="1">
    <citation type="journal article" date="2008" name="Genome Biol.">
        <title>Encapsulated in silica: genome, proteome and physiology of the thermophilic bacterium Anoxybacillus flavithermus WK1.</title>
        <authorList>
            <person name="Saw J.H."/>
            <person name="Mountain B.W."/>
            <person name="Feng L."/>
            <person name="Omelchenko M.V."/>
            <person name="Hou S."/>
            <person name="Saito J.A."/>
            <person name="Stott M.B."/>
            <person name="Li D."/>
            <person name="Zhao G."/>
            <person name="Wu J."/>
            <person name="Galperin M.Y."/>
            <person name="Koonin E.V."/>
            <person name="Makarova K.S."/>
            <person name="Wolf Y.I."/>
            <person name="Rigden D.J."/>
            <person name="Dunfield P.F."/>
            <person name="Wang L."/>
            <person name="Alam M."/>
        </authorList>
    </citation>
    <scope>NUCLEOTIDE SEQUENCE [LARGE SCALE GENOMIC DNA]</scope>
    <source>
        <strain>DSM 21510 / WK1</strain>
    </source>
</reference>
<protein>
    <recommendedName>
        <fullName evidence="1">tRNA uridine 5-carboxymethylaminomethyl modification enzyme MnmG</fullName>
    </recommendedName>
    <alternativeName>
        <fullName evidence="1">Glucose-inhibited division protein A</fullName>
    </alternativeName>
</protein>
<organism>
    <name type="scientific">Anoxybacillus flavithermus (strain DSM 21510 / WK1)</name>
    <dbReference type="NCBI Taxonomy" id="491915"/>
    <lineage>
        <taxon>Bacteria</taxon>
        <taxon>Bacillati</taxon>
        <taxon>Bacillota</taxon>
        <taxon>Bacilli</taxon>
        <taxon>Bacillales</taxon>
        <taxon>Anoxybacillaceae</taxon>
        <taxon>Anoxybacillus</taxon>
    </lineage>
</organism>
<name>MNMG_ANOFW</name>
<dbReference type="EMBL" id="CP000922">
    <property type="protein sequence ID" value="ACJ35211.1"/>
    <property type="molecule type" value="Genomic_DNA"/>
</dbReference>
<dbReference type="SMR" id="B7GMV9"/>
<dbReference type="STRING" id="491915.Aflv_2858"/>
<dbReference type="KEGG" id="afl:Aflv_2858"/>
<dbReference type="eggNOG" id="COG0445">
    <property type="taxonomic scope" value="Bacteria"/>
</dbReference>
<dbReference type="HOGENOM" id="CLU_007831_2_2_9"/>
<dbReference type="Proteomes" id="UP000000742">
    <property type="component" value="Chromosome"/>
</dbReference>
<dbReference type="GO" id="GO:0005829">
    <property type="term" value="C:cytosol"/>
    <property type="evidence" value="ECO:0007669"/>
    <property type="project" value="TreeGrafter"/>
</dbReference>
<dbReference type="GO" id="GO:0050660">
    <property type="term" value="F:flavin adenine dinucleotide binding"/>
    <property type="evidence" value="ECO:0007669"/>
    <property type="project" value="UniProtKB-UniRule"/>
</dbReference>
<dbReference type="GO" id="GO:0030488">
    <property type="term" value="P:tRNA methylation"/>
    <property type="evidence" value="ECO:0007669"/>
    <property type="project" value="TreeGrafter"/>
</dbReference>
<dbReference type="GO" id="GO:0002098">
    <property type="term" value="P:tRNA wobble uridine modification"/>
    <property type="evidence" value="ECO:0007669"/>
    <property type="project" value="InterPro"/>
</dbReference>
<dbReference type="FunFam" id="1.10.10.1800:FF:000001">
    <property type="entry name" value="tRNA uridine 5-carboxymethylaminomethyl modification enzyme MnmG"/>
    <property type="match status" value="1"/>
</dbReference>
<dbReference type="FunFam" id="1.10.150.570:FF:000001">
    <property type="entry name" value="tRNA uridine 5-carboxymethylaminomethyl modification enzyme MnmG"/>
    <property type="match status" value="1"/>
</dbReference>
<dbReference type="FunFam" id="3.50.50.60:FF:000002">
    <property type="entry name" value="tRNA uridine 5-carboxymethylaminomethyl modification enzyme MnmG"/>
    <property type="match status" value="1"/>
</dbReference>
<dbReference type="FunFam" id="3.50.50.60:FF:000063">
    <property type="entry name" value="tRNA uridine 5-carboxymethylaminomethyl modification enzyme MnmG"/>
    <property type="match status" value="1"/>
</dbReference>
<dbReference type="Gene3D" id="3.50.50.60">
    <property type="entry name" value="FAD/NAD(P)-binding domain"/>
    <property type="match status" value="2"/>
</dbReference>
<dbReference type="Gene3D" id="1.10.150.570">
    <property type="entry name" value="GidA associated domain, C-terminal subdomain"/>
    <property type="match status" value="1"/>
</dbReference>
<dbReference type="Gene3D" id="1.10.10.1800">
    <property type="entry name" value="tRNA uridine 5-carboxymethylaminomethyl modification enzyme MnmG/GidA"/>
    <property type="match status" value="1"/>
</dbReference>
<dbReference type="HAMAP" id="MF_00129">
    <property type="entry name" value="MnmG_GidA"/>
    <property type="match status" value="1"/>
</dbReference>
<dbReference type="InterPro" id="IPR036188">
    <property type="entry name" value="FAD/NAD-bd_sf"/>
</dbReference>
<dbReference type="InterPro" id="IPR049312">
    <property type="entry name" value="GIDA_C_N"/>
</dbReference>
<dbReference type="InterPro" id="IPR004416">
    <property type="entry name" value="MnmG"/>
</dbReference>
<dbReference type="InterPro" id="IPR002218">
    <property type="entry name" value="MnmG-rel"/>
</dbReference>
<dbReference type="InterPro" id="IPR020595">
    <property type="entry name" value="MnmG-rel_CS"/>
</dbReference>
<dbReference type="InterPro" id="IPR026904">
    <property type="entry name" value="MnmG_C"/>
</dbReference>
<dbReference type="InterPro" id="IPR047001">
    <property type="entry name" value="MnmG_C_subdom"/>
</dbReference>
<dbReference type="InterPro" id="IPR044920">
    <property type="entry name" value="MnmG_C_subdom_sf"/>
</dbReference>
<dbReference type="InterPro" id="IPR040131">
    <property type="entry name" value="MnmG_N"/>
</dbReference>
<dbReference type="NCBIfam" id="TIGR00136">
    <property type="entry name" value="mnmG_gidA"/>
    <property type="match status" value="1"/>
</dbReference>
<dbReference type="PANTHER" id="PTHR11806">
    <property type="entry name" value="GLUCOSE INHIBITED DIVISION PROTEIN A"/>
    <property type="match status" value="1"/>
</dbReference>
<dbReference type="PANTHER" id="PTHR11806:SF0">
    <property type="entry name" value="PROTEIN MTO1 HOMOLOG, MITOCHONDRIAL"/>
    <property type="match status" value="1"/>
</dbReference>
<dbReference type="Pfam" id="PF01134">
    <property type="entry name" value="GIDA"/>
    <property type="match status" value="1"/>
</dbReference>
<dbReference type="Pfam" id="PF21680">
    <property type="entry name" value="GIDA_C_1st"/>
    <property type="match status" value="1"/>
</dbReference>
<dbReference type="Pfam" id="PF13932">
    <property type="entry name" value="SAM_GIDA_C"/>
    <property type="match status" value="1"/>
</dbReference>
<dbReference type="PRINTS" id="PR00368">
    <property type="entry name" value="FADPNR"/>
</dbReference>
<dbReference type="PRINTS" id="PR00411">
    <property type="entry name" value="PNDRDTASEI"/>
</dbReference>
<dbReference type="SMART" id="SM01228">
    <property type="entry name" value="GIDA_assoc_3"/>
    <property type="match status" value="1"/>
</dbReference>
<dbReference type="SUPFAM" id="SSF51905">
    <property type="entry name" value="FAD/NAD(P)-binding domain"/>
    <property type="match status" value="1"/>
</dbReference>
<dbReference type="PROSITE" id="PS01280">
    <property type="entry name" value="GIDA_1"/>
    <property type="match status" value="1"/>
</dbReference>
<dbReference type="PROSITE" id="PS01281">
    <property type="entry name" value="GIDA_2"/>
    <property type="match status" value="1"/>
</dbReference>
<sequence>MLREIRRVFMHYEAGSYDVIVVGAGHAGCEAALAAARMGASTLVITLNLDMIAFMPCNPSIGGPAKGIVVREIDALGGEMGKNIDKTHIQMRMLNTGKGPAVRALRAQADKFLYQQEMKKTLENQENLTLLQGKVEKLIVEDGVCKGVITHTGARYYAKAVVITTGTFLRGEIIIGDIKYSSGPNNQQPSIKLSEHLEELGFELVRFKTGTPPRVNSHTIDYSKTEIQPGDDVPRAFSYETKQYITDQLPCWLTYTTEETHRIIDENLHLSPMYSGMIKGTGPRYCPSIEDKIVRFHDKPRHQIFLEPEGRHTQEVYVQGLSTSLPEHIQRQMLATIPGLEKAQLMRAGYAIEYDAIVPTQLWPTLETKVVQRLYTAGQINGTSGYEEAAGQGLIAGINAACKALGKEELILSRSEAYIGVLIDDLVTKGTNEPYRLLTSRAEYRLLLRHDNADLRLTEIGYKIGLISQERYEKFVAKKEAIEAEKKRLKSYIIKPTPQVQQLIRDVGGSELKDGIRAADLLKRPEMTYEHIQMIAPAEQPIDPEVAEQVEIQIKYEGYIEKSLQQVEKLKKMENKKIPEDIDYDAITGLATEARQKLKQVRPLSIAQASRISGVNPADISILLVYLEQGKIARVSNE</sequence>
<accession>B7GMV9</accession>
<proteinExistence type="inferred from homology"/>
<feature type="chain" id="PRO_1000203159" description="tRNA uridine 5-carboxymethylaminomethyl modification enzyme MnmG">
    <location>
        <begin position="1"/>
        <end position="638"/>
    </location>
</feature>
<feature type="binding site" evidence="1">
    <location>
        <begin position="23"/>
        <end position="28"/>
    </location>
    <ligand>
        <name>FAD</name>
        <dbReference type="ChEBI" id="CHEBI:57692"/>
    </ligand>
</feature>
<feature type="binding site" evidence="1">
    <location>
        <position position="135"/>
    </location>
    <ligand>
        <name>FAD</name>
        <dbReference type="ChEBI" id="CHEBI:57692"/>
    </ligand>
</feature>
<feature type="binding site" evidence="1">
    <location>
        <position position="190"/>
    </location>
    <ligand>
        <name>FAD</name>
        <dbReference type="ChEBI" id="CHEBI:57692"/>
    </ligand>
</feature>
<feature type="binding site" evidence="1">
    <location>
        <begin position="282"/>
        <end position="296"/>
    </location>
    <ligand>
        <name>NAD(+)</name>
        <dbReference type="ChEBI" id="CHEBI:57540"/>
    </ligand>
</feature>
<feature type="binding site" evidence="1">
    <location>
        <position position="379"/>
    </location>
    <ligand>
        <name>FAD</name>
        <dbReference type="ChEBI" id="CHEBI:57692"/>
    </ligand>
</feature>
<comment type="function">
    <text evidence="1">NAD-binding protein involved in the addition of a carboxymethylaminomethyl (cmnm) group at the wobble position (U34) of certain tRNAs, forming tRNA-cmnm(5)s(2)U34.</text>
</comment>
<comment type="cofactor">
    <cofactor evidence="1">
        <name>FAD</name>
        <dbReference type="ChEBI" id="CHEBI:57692"/>
    </cofactor>
</comment>
<comment type="subunit">
    <text evidence="1">Homodimer. Heterotetramer of two MnmE and two MnmG subunits.</text>
</comment>
<comment type="subcellular location">
    <subcellularLocation>
        <location evidence="1">Cytoplasm</location>
    </subcellularLocation>
</comment>
<comment type="similarity">
    <text evidence="1">Belongs to the MnmG family.</text>
</comment>
<gene>
    <name evidence="1" type="primary">mnmG</name>
    <name evidence="1" type="synonym">gidA</name>
    <name type="ordered locus">Aflv_2858</name>
</gene>
<evidence type="ECO:0000255" key="1">
    <source>
        <dbReference type="HAMAP-Rule" id="MF_00129"/>
    </source>
</evidence>
<keyword id="KW-0963">Cytoplasm</keyword>
<keyword id="KW-0274">FAD</keyword>
<keyword id="KW-0285">Flavoprotein</keyword>
<keyword id="KW-0520">NAD</keyword>
<keyword id="KW-0819">tRNA processing</keyword>